<dbReference type="EC" id="2.7.7.-" evidence="6"/>
<dbReference type="EMBL" id="Z73578">
    <property type="protein sequence ID" value="CAA97937.1"/>
    <property type="molecule type" value="Genomic_DNA"/>
</dbReference>
<dbReference type="EMBL" id="BK006949">
    <property type="protein sequence ID" value="DAA11214.1"/>
    <property type="molecule type" value="Genomic_DNA"/>
</dbReference>
<dbReference type="PIR" id="S65241">
    <property type="entry name" value="S65241"/>
</dbReference>
<dbReference type="RefSeq" id="NP_015102.1">
    <property type="nucleotide sequence ID" value="NM_001184036.1"/>
</dbReference>
<dbReference type="SMR" id="Q08968"/>
<dbReference type="BioGRID" id="35963">
    <property type="interactions" value="59"/>
</dbReference>
<dbReference type="DIP" id="DIP-2001N"/>
<dbReference type="FunCoup" id="Q08968">
    <property type="interactions" value="424"/>
</dbReference>
<dbReference type="IntAct" id="Q08968">
    <property type="interactions" value="7"/>
</dbReference>
<dbReference type="MINT" id="Q08968"/>
<dbReference type="STRING" id="4932.YPL222W"/>
<dbReference type="PaxDb" id="4932-YPL222W"/>
<dbReference type="PeptideAtlas" id="Q08968"/>
<dbReference type="EnsemblFungi" id="YPL222W_mRNA">
    <property type="protein sequence ID" value="YPL222W"/>
    <property type="gene ID" value="YPL222W"/>
</dbReference>
<dbReference type="GeneID" id="855879"/>
<dbReference type="KEGG" id="sce:YPL222W"/>
<dbReference type="AGR" id="SGD:S000006143"/>
<dbReference type="SGD" id="S000006143">
    <property type="gene designation" value="FMP40"/>
</dbReference>
<dbReference type="VEuPathDB" id="FungiDB:YPL222W"/>
<dbReference type="eggNOG" id="KOG2542">
    <property type="taxonomic scope" value="Eukaryota"/>
</dbReference>
<dbReference type="HOGENOM" id="CLU_010245_2_1_1"/>
<dbReference type="InParanoid" id="Q08968"/>
<dbReference type="OMA" id="HVVNLNA"/>
<dbReference type="OrthoDB" id="10254721at2759"/>
<dbReference type="BioCyc" id="MetaCyc:G3O-34111-MONOMER"/>
<dbReference type="BioCyc" id="YEAST:G3O-34111-MONOMER"/>
<dbReference type="BioGRID-ORCS" id="855879">
    <property type="hits" value="4 hits in 10 CRISPR screens"/>
</dbReference>
<dbReference type="PRO" id="PR:Q08968"/>
<dbReference type="Proteomes" id="UP000002311">
    <property type="component" value="Chromosome XVI"/>
</dbReference>
<dbReference type="RNAct" id="Q08968">
    <property type="molecule type" value="protein"/>
</dbReference>
<dbReference type="GO" id="GO:0005739">
    <property type="term" value="C:mitochondrion"/>
    <property type="evidence" value="ECO:0000314"/>
    <property type="project" value="SGD"/>
</dbReference>
<dbReference type="GO" id="GO:0070733">
    <property type="term" value="F:AMPylase activity"/>
    <property type="evidence" value="ECO:0000314"/>
    <property type="project" value="UniProtKB"/>
</dbReference>
<dbReference type="GO" id="GO:0005524">
    <property type="term" value="F:ATP binding"/>
    <property type="evidence" value="ECO:0007669"/>
    <property type="project" value="UniProtKB-KW"/>
</dbReference>
<dbReference type="GO" id="GO:0046872">
    <property type="term" value="F:metal ion binding"/>
    <property type="evidence" value="ECO:0007669"/>
    <property type="project" value="UniProtKB-KW"/>
</dbReference>
<dbReference type="GO" id="GO:0045454">
    <property type="term" value="P:cell redox homeostasis"/>
    <property type="evidence" value="ECO:0000314"/>
    <property type="project" value="UniProtKB"/>
</dbReference>
<dbReference type="GO" id="GO:0018117">
    <property type="term" value="P:protein adenylylation"/>
    <property type="evidence" value="ECO:0000314"/>
    <property type="project" value="UniProtKB"/>
</dbReference>
<dbReference type="HAMAP" id="MF_00692">
    <property type="entry name" value="YdiU_SelO"/>
    <property type="match status" value="1"/>
</dbReference>
<dbReference type="InterPro" id="IPR003846">
    <property type="entry name" value="SelO"/>
</dbReference>
<dbReference type="PANTHER" id="PTHR32057">
    <property type="entry name" value="PROTEIN ADENYLYLTRANSFERASE SELO, MITOCHONDRIAL"/>
    <property type="match status" value="1"/>
</dbReference>
<dbReference type="PANTHER" id="PTHR32057:SF14">
    <property type="entry name" value="PROTEIN ADENYLYLTRANSFERASE SELO, MITOCHONDRIAL"/>
    <property type="match status" value="1"/>
</dbReference>
<dbReference type="Pfam" id="PF02696">
    <property type="entry name" value="SelO"/>
    <property type="match status" value="1"/>
</dbReference>
<reference key="1">
    <citation type="journal article" date="1997" name="Nature">
        <title>The nucleotide sequence of Saccharomyces cerevisiae chromosome XVI.</title>
        <authorList>
            <person name="Bussey H."/>
            <person name="Storms R.K."/>
            <person name="Ahmed A."/>
            <person name="Albermann K."/>
            <person name="Allen E."/>
            <person name="Ansorge W."/>
            <person name="Araujo R."/>
            <person name="Aparicio A."/>
            <person name="Barrell B.G."/>
            <person name="Badcock K."/>
            <person name="Benes V."/>
            <person name="Botstein D."/>
            <person name="Bowman S."/>
            <person name="Brueckner M."/>
            <person name="Carpenter J."/>
            <person name="Cherry J.M."/>
            <person name="Chung E."/>
            <person name="Churcher C.M."/>
            <person name="Coster F."/>
            <person name="Davis K."/>
            <person name="Davis R.W."/>
            <person name="Dietrich F.S."/>
            <person name="Delius H."/>
            <person name="DiPaolo T."/>
            <person name="Dubois E."/>
            <person name="Duesterhoeft A."/>
            <person name="Duncan M."/>
            <person name="Floeth M."/>
            <person name="Fortin N."/>
            <person name="Friesen J.D."/>
            <person name="Fritz C."/>
            <person name="Goffeau A."/>
            <person name="Hall J."/>
            <person name="Hebling U."/>
            <person name="Heumann K."/>
            <person name="Hilbert H."/>
            <person name="Hillier L.W."/>
            <person name="Hunicke-Smith S."/>
            <person name="Hyman R.W."/>
            <person name="Johnston M."/>
            <person name="Kalman S."/>
            <person name="Kleine K."/>
            <person name="Komp C."/>
            <person name="Kurdi O."/>
            <person name="Lashkari D."/>
            <person name="Lew H."/>
            <person name="Lin A."/>
            <person name="Lin D."/>
            <person name="Louis E.J."/>
            <person name="Marathe R."/>
            <person name="Messenguy F."/>
            <person name="Mewes H.-W."/>
            <person name="Mirtipati S."/>
            <person name="Moestl D."/>
            <person name="Mueller-Auer S."/>
            <person name="Namath A."/>
            <person name="Nentwich U."/>
            <person name="Oefner P."/>
            <person name="Pearson D."/>
            <person name="Petel F.X."/>
            <person name="Pohl T.M."/>
            <person name="Purnelle B."/>
            <person name="Rajandream M.A."/>
            <person name="Rechmann S."/>
            <person name="Rieger M."/>
            <person name="Riles L."/>
            <person name="Roberts D."/>
            <person name="Schaefer M."/>
            <person name="Scharfe M."/>
            <person name="Scherens B."/>
            <person name="Schramm S."/>
            <person name="Schroeder M."/>
            <person name="Sdicu A.-M."/>
            <person name="Tettelin H."/>
            <person name="Urrestarazu L.A."/>
            <person name="Ushinsky S."/>
            <person name="Vierendeels F."/>
            <person name="Vissers S."/>
            <person name="Voss H."/>
            <person name="Walsh S.V."/>
            <person name="Wambutt R."/>
            <person name="Wang Y."/>
            <person name="Wedler E."/>
            <person name="Wedler H."/>
            <person name="Winnett E."/>
            <person name="Zhong W.-W."/>
            <person name="Zollner A."/>
            <person name="Vo D.H."/>
            <person name="Hani J."/>
        </authorList>
    </citation>
    <scope>NUCLEOTIDE SEQUENCE [LARGE SCALE GENOMIC DNA]</scope>
    <source>
        <strain>ATCC 204508 / S288c</strain>
    </source>
</reference>
<reference key="2">
    <citation type="journal article" date="2014" name="G3 (Bethesda)">
        <title>The reference genome sequence of Saccharomyces cerevisiae: Then and now.</title>
        <authorList>
            <person name="Engel S.R."/>
            <person name="Dietrich F.S."/>
            <person name="Fisk D.G."/>
            <person name="Binkley G."/>
            <person name="Balakrishnan R."/>
            <person name="Costanzo M.C."/>
            <person name="Dwight S.S."/>
            <person name="Hitz B.C."/>
            <person name="Karra K."/>
            <person name="Nash R.S."/>
            <person name="Weng S."/>
            <person name="Wong E.D."/>
            <person name="Lloyd P."/>
            <person name="Skrzypek M.S."/>
            <person name="Miyasato S.R."/>
            <person name="Simison M."/>
            <person name="Cherry J.M."/>
        </authorList>
    </citation>
    <scope>GENOME REANNOTATION</scope>
    <source>
        <strain>ATCC 204508 / S288c</strain>
    </source>
</reference>
<reference key="3">
    <citation type="journal article" date="2003" name="Nature">
        <title>Global analysis of protein localization in budding yeast.</title>
        <authorList>
            <person name="Huh W.-K."/>
            <person name="Falvo J.V."/>
            <person name="Gerke L.C."/>
            <person name="Carroll A.S."/>
            <person name="Howson R.W."/>
            <person name="Weissman J.S."/>
            <person name="O'Shea E.K."/>
        </authorList>
    </citation>
    <scope>SUBCELLULAR LOCATION [LARGE SCALE ANALYSIS]</scope>
</reference>
<reference key="4">
    <citation type="journal article" date="2003" name="Nature">
        <title>Global analysis of protein expression in yeast.</title>
        <authorList>
            <person name="Ghaemmaghami S."/>
            <person name="Huh W.-K."/>
            <person name="Bower K."/>
            <person name="Howson R.W."/>
            <person name="Belle A."/>
            <person name="Dephoure N."/>
            <person name="O'Shea E.K."/>
            <person name="Weissman J.S."/>
        </authorList>
    </citation>
    <scope>LEVEL OF PROTEIN EXPRESSION [LARGE SCALE ANALYSIS]</scope>
</reference>
<reference key="5">
    <citation type="journal article" date="2003" name="Proc. Natl. Acad. Sci. U.S.A.">
        <title>The proteome of Saccharomyces cerevisiae mitochondria.</title>
        <authorList>
            <person name="Sickmann A."/>
            <person name="Reinders J."/>
            <person name="Wagner Y."/>
            <person name="Joppich C."/>
            <person name="Zahedi R.P."/>
            <person name="Meyer H.E."/>
            <person name="Schoenfisch B."/>
            <person name="Perschil I."/>
            <person name="Chacinska A."/>
            <person name="Guiard B."/>
            <person name="Rehling P."/>
            <person name="Pfanner N."/>
            <person name="Meisinger C."/>
        </authorList>
    </citation>
    <scope>SUBCELLULAR LOCATION [LARGE SCALE ANALYSIS]</scope>
    <source>
        <strain>ATCC 76625 / YPH499</strain>
    </source>
</reference>
<reference key="6">
    <citation type="journal article" date="2008" name="Appl. Microbiol. Biotechnol.">
        <title>Acetaldehyde addition throughout the growth phase alleviates the phenotypic effect of zinc deficiency in Saccharomyces cerevisiae.</title>
        <authorList>
            <person name="Cheraiti N."/>
            <person name="Sauvage F.-X."/>
            <person name="Salmon J.-M."/>
        </authorList>
    </citation>
    <scope>INDUCTION</scope>
</reference>
<reference key="7">
    <citation type="journal article" date="2018" name="Cell">
        <title>Protein AMPylation by an Evolutionarily Conserved Pseudokinase.</title>
        <authorList>
            <person name="Sreelatha A."/>
            <person name="Yee S.S."/>
            <person name="Lopez V.A."/>
            <person name="Park B.C."/>
            <person name="Kinch L.N."/>
            <person name="Pilch S."/>
            <person name="Servage K.A."/>
            <person name="Zhang J."/>
            <person name="Jiou J."/>
            <person name="Karasiewicz-Urbanska M."/>
            <person name="Lobocka M."/>
            <person name="Grishin N.V."/>
            <person name="Orth K."/>
            <person name="Kucharczyk R."/>
            <person name="Pawlowski K."/>
            <person name="Tomchick D.R."/>
            <person name="Tagliabracci V.S."/>
        </authorList>
    </citation>
    <scope>FUNCTION</scope>
    <scope>CATALYTIC ACTIVITY</scope>
    <scope>SUBCELLULAR LOCATION</scope>
    <scope>INDUCTION</scope>
    <scope>DISRUPTION PHENOTYPE</scope>
    <scope>DISULFIDE BOND</scope>
    <scope>MUTAGENESIS OF ASP-348</scope>
</reference>
<sequence>MGEKRTIIKALKNSAASHFIKKLTADTSLSSIQEAINVVQQYNATDPVRLKLFHTPRMVSQGAHFAFCLPTKKPHYKPLLLSQNALDEFNLVQDQDLEKILSGEKVYYSDSIFPYSTVYSGFQFGSFAAQLGDGRVVNLFDLKDKCSGQWQTFQLKGAGMTPFSRFADGKAVLRSSIREFIMSEALHSIGIPSTRAMQLTLLPGTKAQRRNQEPCAVVCRFAPSWIRLGNFNLFRWRHDLKGLIQLSDYCIEELFAGGTQFEGKPDFNIFKRDFFPDTETKIDEQVEKDETEVSTMTGDNISTLSKYDEFFRHVVSLNANTVAHWQAYGFANGVLNTDNTSIMGLTIDYGPFAFLDKFEPSFTPNHDDTAKRYSFANQPSIIWWNLQQFAKDLACLLGPEARDLELLLKGELNSVDDALEKTMIERVQKLVELSANEYKYVFTTRYAQIMSQRLGVDLDLEKCMSSTNLKDIEHAAEKAKEFCDVIVEPLLDILQATKVDYNNFFIHLQNYKGPFFIKDKSDTATLFGAFDEEYLGMFFNSKQLQQMAETEEAFAAGEKVFDANGELRLLNEKLQEIRNWTQDYLTLVPPTETAARASLAKKANPLFVPRSWVLEEVVDDLMYSQRDGLQDPSSELDTSALKKLYLMSVNPYDRTKWDVTLRPELETKWADLSHQDDAKFMMQASCSS</sequence>
<comment type="function">
    <text evidence="6">Catalyzes the transfer of adenosine 5'-monophosphate (AMP) to Tyr residues of target mitochondrial proteins (AMPylation) (PubMed:30270044). Involved in redox homeostasis by regulating the cellular response to oxidative stress (PubMed:30270044). Regulates protein S-glutathionylation levels possibly by AMPylation of deglutathionylation enzymes such as glutaredoxins (PubMed:30270044).</text>
</comment>
<comment type="catalytic activity">
    <reaction evidence="6">
        <text>L-tyrosyl-[protein] + ATP = O-(5'-adenylyl)-L-tyrosyl-[protein] + diphosphate</text>
        <dbReference type="Rhea" id="RHEA:54288"/>
        <dbReference type="Rhea" id="RHEA-COMP:10136"/>
        <dbReference type="Rhea" id="RHEA-COMP:13846"/>
        <dbReference type="ChEBI" id="CHEBI:30616"/>
        <dbReference type="ChEBI" id="CHEBI:33019"/>
        <dbReference type="ChEBI" id="CHEBI:46858"/>
        <dbReference type="ChEBI" id="CHEBI:83624"/>
    </reaction>
    <physiologicalReaction direction="left-to-right" evidence="6">
        <dbReference type="Rhea" id="RHEA:54289"/>
    </physiologicalReaction>
</comment>
<comment type="cofactor">
    <cofactor evidence="1">
        <name>Mg(2+)</name>
        <dbReference type="ChEBI" id="CHEBI:18420"/>
    </cofactor>
</comment>
<comment type="interaction">
    <interactant intactId="EBI-29375">
        <id>Q08968</id>
    </interactant>
    <interactant intactId="EBI-701">
        <id>P33203</id>
        <label>PRP40</label>
    </interactant>
    <organismsDiffer>false</organismsDiffer>
    <experiments>2</experiments>
</comment>
<comment type="subcellular location">
    <subcellularLocation>
        <location evidence="2 4 6">Mitochondrion</location>
    </subcellularLocation>
</comment>
<comment type="induction">
    <text evidence="5 6">Induced in absence of non-fermentable carbon sources including glycerol, lactate, and acetate (at protein level) (PubMed:30270044). Expression is regulated by zinc levels (PubMed:17938904).</text>
</comment>
<comment type="PTM">
    <text evidence="6">Forms probably one or more intrachain disulfide bridges.</text>
</comment>
<comment type="disruption phenotype">
    <text evidence="6">Reduced growth and survival in presence of oxygen reactive species.</text>
</comment>
<comment type="miscellaneous">
    <text evidence="3">Present with 2430 molecules/cell in log phase SD medium.</text>
</comment>
<comment type="similarity">
    <text evidence="8">Belongs to the SELO family.</text>
</comment>
<accession>Q08968</accession>
<accession>D6W3E8</accession>
<gene>
    <name evidence="10" type="primary">FMP40</name>
    <name evidence="10" type="ordered locus">YPL222W</name>
</gene>
<protein>
    <recommendedName>
        <fullName evidence="8">Protein adenylyltransferase SelO, mitochondrial</fullName>
        <ecNumber evidence="6">2.7.7.-</ecNumber>
    </recommendedName>
    <alternativeName>
        <fullName evidence="7">Selenoprotein O</fullName>
        <shortName evidence="7">SelO</shortName>
    </alternativeName>
</protein>
<feature type="transit peptide" description="Mitochondrion" evidence="6">
    <location>
        <begin position="1"/>
        <end position="23"/>
    </location>
</feature>
<feature type="chain" id="PRO_0000121401" description="Protein adenylyltransferase SelO, mitochondrial">
    <location>
        <begin position="24"/>
        <end position="688"/>
    </location>
</feature>
<feature type="active site" description="Proton acceptor" evidence="1">
    <location>
        <position position="338"/>
    </location>
</feature>
<feature type="binding site" evidence="1">
    <location>
        <position position="132"/>
    </location>
    <ligand>
        <name>ATP</name>
        <dbReference type="ChEBI" id="CHEBI:30616"/>
    </ligand>
</feature>
<feature type="binding site" evidence="1">
    <location>
        <position position="134"/>
    </location>
    <ligand>
        <name>ATP</name>
        <dbReference type="ChEBI" id="CHEBI:30616"/>
    </ligand>
</feature>
<feature type="binding site" evidence="1">
    <location>
        <position position="135"/>
    </location>
    <ligand>
        <name>ATP</name>
        <dbReference type="ChEBI" id="CHEBI:30616"/>
    </ligand>
</feature>
<feature type="binding site" evidence="1">
    <location>
        <position position="156"/>
    </location>
    <ligand>
        <name>ATP</name>
        <dbReference type="ChEBI" id="CHEBI:30616"/>
    </ligand>
</feature>
<feature type="binding site" evidence="1">
    <location>
        <position position="168"/>
    </location>
    <ligand>
        <name>ATP</name>
        <dbReference type="ChEBI" id="CHEBI:30616"/>
    </ligand>
</feature>
<feature type="binding site" evidence="1">
    <location>
        <position position="169"/>
    </location>
    <ligand>
        <name>ATP</name>
        <dbReference type="ChEBI" id="CHEBI:30616"/>
    </ligand>
</feature>
<feature type="binding site" evidence="1">
    <location>
        <position position="220"/>
    </location>
    <ligand>
        <name>ATP</name>
        <dbReference type="ChEBI" id="CHEBI:30616"/>
    </ligand>
</feature>
<feature type="binding site" evidence="1">
    <location>
        <position position="227"/>
    </location>
    <ligand>
        <name>ATP</name>
        <dbReference type="ChEBI" id="CHEBI:30616"/>
    </ligand>
</feature>
<feature type="binding site" evidence="1">
    <location>
        <position position="339"/>
    </location>
    <ligand>
        <name>Mg(2+)</name>
        <dbReference type="ChEBI" id="CHEBI:18420"/>
    </ligand>
</feature>
<feature type="binding site" evidence="1">
    <location>
        <position position="348"/>
    </location>
    <ligand>
        <name>ATP</name>
        <dbReference type="ChEBI" id="CHEBI:30616"/>
    </ligand>
</feature>
<feature type="binding site" evidence="9">
    <location>
        <position position="348"/>
    </location>
    <ligand>
        <name>Mg(2+)</name>
        <dbReference type="ChEBI" id="CHEBI:18420"/>
    </ligand>
</feature>
<feature type="mutagenesis site" description="Loss of catalytic activity. Loss of ATP binding. Reduced survival and growth in response to reactive oxygen species." evidence="6">
    <original>D</original>
    <variation>A</variation>
    <location>
        <position position="348"/>
    </location>
</feature>
<evidence type="ECO:0000250" key="1">
    <source>
        <dbReference type="UniProtKB" id="Q87VB1"/>
    </source>
</evidence>
<evidence type="ECO:0000269" key="2">
    <source>
    </source>
</evidence>
<evidence type="ECO:0000269" key="3">
    <source>
    </source>
</evidence>
<evidence type="ECO:0000269" key="4">
    <source>
    </source>
</evidence>
<evidence type="ECO:0000269" key="5">
    <source>
    </source>
</evidence>
<evidence type="ECO:0000269" key="6">
    <source>
    </source>
</evidence>
<evidence type="ECO:0000303" key="7">
    <source>
    </source>
</evidence>
<evidence type="ECO:0000305" key="8"/>
<evidence type="ECO:0000305" key="9">
    <source>
    </source>
</evidence>
<evidence type="ECO:0000312" key="10">
    <source>
        <dbReference type="SGD" id="S000006143"/>
    </source>
</evidence>
<organism>
    <name type="scientific">Saccharomyces cerevisiae (strain ATCC 204508 / S288c)</name>
    <name type="common">Baker's yeast</name>
    <dbReference type="NCBI Taxonomy" id="559292"/>
    <lineage>
        <taxon>Eukaryota</taxon>
        <taxon>Fungi</taxon>
        <taxon>Dikarya</taxon>
        <taxon>Ascomycota</taxon>
        <taxon>Saccharomycotina</taxon>
        <taxon>Saccharomycetes</taxon>
        <taxon>Saccharomycetales</taxon>
        <taxon>Saccharomycetaceae</taxon>
        <taxon>Saccharomyces</taxon>
    </lineage>
</organism>
<name>SELO_YEAST</name>
<proteinExistence type="evidence at protein level"/>
<keyword id="KW-0067">ATP-binding</keyword>
<keyword id="KW-1015">Disulfide bond</keyword>
<keyword id="KW-0460">Magnesium</keyword>
<keyword id="KW-0479">Metal-binding</keyword>
<keyword id="KW-0496">Mitochondrion</keyword>
<keyword id="KW-0547">Nucleotide-binding</keyword>
<keyword id="KW-0548">Nucleotidyltransferase</keyword>
<keyword id="KW-1185">Reference proteome</keyword>
<keyword id="KW-0808">Transferase</keyword>
<keyword id="KW-0809">Transit peptide</keyword>